<keyword id="KW-0067">ATP-binding</keyword>
<keyword id="KW-0963">Cytoplasm</keyword>
<keyword id="KW-0547">Nucleotide-binding</keyword>
<keyword id="KW-0548">Nucleotidyltransferase</keyword>
<keyword id="KW-1185">Reference proteome</keyword>
<keyword id="KW-0808">Transferase</keyword>
<keyword id="KW-0819">tRNA processing</keyword>
<accession>A1AGH4</accession>
<dbReference type="EC" id="2.7.7.87" evidence="1"/>
<dbReference type="EMBL" id="CP000468">
    <property type="protein sequence ID" value="ABJ02764.1"/>
    <property type="status" value="ALT_INIT"/>
    <property type="molecule type" value="Genomic_DNA"/>
</dbReference>
<dbReference type="RefSeq" id="WP_001297709.1">
    <property type="nucleotide sequence ID" value="NZ_CADILS010000044.1"/>
</dbReference>
<dbReference type="SMR" id="A1AGH4"/>
<dbReference type="GeneID" id="75204135"/>
<dbReference type="KEGG" id="ecv:APECO1_3164"/>
<dbReference type="HOGENOM" id="CLU_031397_6_0_6"/>
<dbReference type="Proteomes" id="UP000008216">
    <property type="component" value="Chromosome"/>
</dbReference>
<dbReference type="GO" id="GO:0005737">
    <property type="term" value="C:cytoplasm"/>
    <property type="evidence" value="ECO:0007669"/>
    <property type="project" value="UniProtKB-SubCell"/>
</dbReference>
<dbReference type="GO" id="GO:0005524">
    <property type="term" value="F:ATP binding"/>
    <property type="evidence" value="ECO:0007669"/>
    <property type="project" value="UniProtKB-UniRule"/>
</dbReference>
<dbReference type="GO" id="GO:0003725">
    <property type="term" value="F:double-stranded RNA binding"/>
    <property type="evidence" value="ECO:0007669"/>
    <property type="project" value="InterPro"/>
</dbReference>
<dbReference type="GO" id="GO:0061710">
    <property type="term" value="F:L-threonylcarbamoyladenylate synthase"/>
    <property type="evidence" value="ECO:0007669"/>
    <property type="project" value="UniProtKB-EC"/>
</dbReference>
<dbReference type="GO" id="GO:0000049">
    <property type="term" value="F:tRNA binding"/>
    <property type="evidence" value="ECO:0007669"/>
    <property type="project" value="TreeGrafter"/>
</dbReference>
<dbReference type="GO" id="GO:0006450">
    <property type="term" value="P:regulation of translational fidelity"/>
    <property type="evidence" value="ECO:0007669"/>
    <property type="project" value="TreeGrafter"/>
</dbReference>
<dbReference type="GO" id="GO:0002949">
    <property type="term" value="P:tRNA threonylcarbamoyladenosine modification"/>
    <property type="evidence" value="ECO:0007669"/>
    <property type="project" value="UniProtKB-UniRule"/>
</dbReference>
<dbReference type="FunFam" id="3.90.870.10:FF:000004">
    <property type="entry name" value="Threonylcarbamoyl-AMP synthase"/>
    <property type="match status" value="1"/>
</dbReference>
<dbReference type="Gene3D" id="3.90.870.10">
    <property type="entry name" value="DHBP synthase"/>
    <property type="match status" value="1"/>
</dbReference>
<dbReference type="HAMAP" id="MF_01852">
    <property type="entry name" value="TsaC"/>
    <property type="match status" value="1"/>
</dbReference>
<dbReference type="InterPro" id="IPR017945">
    <property type="entry name" value="DHBP_synth_RibB-like_a/b_dom"/>
</dbReference>
<dbReference type="InterPro" id="IPR006070">
    <property type="entry name" value="Sua5-like_dom"/>
</dbReference>
<dbReference type="InterPro" id="IPR023535">
    <property type="entry name" value="TC-AMP_synthase"/>
</dbReference>
<dbReference type="InterPro" id="IPR050156">
    <property type="entry name" value="TC-AMP_synthase_SUA5"/>
</dbReference>
<dbReference type="NCBIfam" id="NF007919">
    <property type="entry name" value="PRK10634.1"/>
    <property type="match status" value="1"/>
</dbReference>
<dbReference type="PANTHER" id="PTHR17490">
    <property type="entry name" value="SUA5"/>
    <property type="match status" value="1"/>
</dbReference>
<dbReference type="PANTHER" id="PTHR17490:SF18">
    <property type="entry name" value="THREONYLCARBAMOYL-AMP SYNTHASE"/>
    <property type="match status" value="1"/>
</dbReference>
<dbReference type="Pfam" id="PF01300">
    <property type="entry name" value="Sua5_yciO_yrdC"/>
    <property type="match status" value="1"/>
</dbReference>
<dbReference type="SUPFAM" id="SSF55821">
    <property type="entry name" value="YrdC/RibB"/>
    <property type="match status" value="1"/>
</dbReference>
<dbReference type="PROSITE" id="PS51163">
    <property type="entry name" value="YRDC"/>
    <property type="match status" value="1"/>
</dbReference>
<evidence type="ECO:0000255" key="1">
    <source>
        <dbReference type="HAMAP-Rule" id="MF_01852"/>
    </source>
</evidence>
<evidence type="ECO:0000305" key="2"/>
<gene>
    <name evidence="1" type="primary">tsaC</name>
    <name type="synonym">rimN</name>
    <name type="ordered locus">Ecok1_32700</name>
    <name type="ORF">APECO1_3164</name>
</gene>
<reference key="1">
    <citation type="journal article" date="2007" name="J. Bacteriol.">
        <title>The genome sequence of avian pathogenic Escherichia coli strain O1:K1:H7 shares strong similarities with human extraintestinal pathogenic E. coli genomes.</title>
        <authorList>
            <person name="Johnson T.J."/>
            <person name="Kariyawasam S."/>
            <person name="Wannemuehler Y."/>
            <person name="Mangiamele P."/>
            <person name="Johnson S.J."/>
            <person name="Doetkott C."/>
            <person name="Skyberg J.A."/>
            <person name="Lynne A.M."/>
            <person name="Johnson J.R."/>
            <person name="Nolan L.K."/>
        </authorList>
    </citation>
    <scope>NUCLEOTIDE SEQUENCE [LARGE SCALE GENOMIC DNA]</scope>
</reference>
<organism>
    <name type="scientific">Escherichia coli O1:K1 / APEC</name>
    <dbReference type="NCBI Taxonomy" id="405955"/>
    <lineage>
        <taxon>Bacteria</taxon>
        <taxon>Pseudomonadati</taxon>
        <taxon>Pseudomonadota</taxon>
        <taxon>Gammaproteobacteria</taxon>
        <taxon>Enterobacterales</taxon>
        <taxon>Enterobacteriaceae</taxon>
        <taxon>Escherichia</taxon>
    </lineage>
</organism>
<protein>
    <recommendedName>
        <fullName evidence="1">Threonylcarbamoyl-AMP synthase</fullName>
        <shortName evidence="1">TC-AMP synthase</shortName>
        <ecNumber evidence="1">2.7.7.87</ecNumber>
    </recommendedName>
    <alternativeName>
        <fullName evidence="1">L-threonylcarbamoyladenylate synthase</fullName>
    </alternativeName>
    <alternativeName>
        <fullName evidence="1">t(6)A37 threonylcarbamoyladenosine biosynthesis protein TsaC</fullName>
    </alternativeName>
    <alternativeName>
        <fullName evidence="1">tRNA threonylcarbamoyladenosine biosynthesis protein TsaC</fullName>
    </alternativeName>
</protein>
<proteinExistence type="inferred from homology"/>
<comment type="function">
    <text evidence="1">Required for the formation of a threonylcarbamoyl group on adenosine at position 37 (t(6)A37) in tRNAs that read codons beginning with adenine. Catalyzes the conversion of L-threonine, HCO(3)(-)/CO(2) and ATP to give threonylcarbamoyl-AMP (TC-AMP) as the acyladenylate intermediate, with the release of diphosphate.</text>
</comment>
<comment type="catalytic activity">
    <reaction evidence="1">
        <text>L-threonine + hydrogencarbonate + ATP = L-threonylcarbamoyladenylate + diphosphate + H2O</text>
        <dbReference type="Rhea" id="RHEA:36407"/>
        <dbReference type="ChEBI" id="CHEBI:15377"/>
        <dbReference type="ChEBI" id="CHEBI:17544"/>
        <dbReference type="ChEBI" id="CHEBI:30616"/>
        <dbReference type="ChEBI" id="CHEBI:33019"/>
        <dbReference type="ChEBI" id="CHEBI:57926"/>
        <dbReference type="ChEBI" id="CHEBI:73682"/>
        <dbReference type="EC" id="2.7.7.87"/>
    </reaction>
</comment>
<comment type="subcellular location">
    <subcellularLocation>
        <location evidence="1">Cytoplasm</location>
    </subcellularLocation>
</comment>
<comment type="similarity">
    <text evidence="1">Belongs to the SUA5 family. TsaC subfamily.</text>
</comment>
<comment type="sequence caution" evidence="2">
    <conflict type="erroneous initiation">
        <sequence resource="EMBL-CDS" id="ABJ02764"/>
    </conflict>
</comment>
<feature type="chain" id="PRO_0000352918" description="Threonylcarbamoyl-AMP synthase">
    <location>
        <begin position="1"/>
        <end position="190"/>
    </location>
</feature>
<feature type="domain" description="YrdC-like" evidence="1">
    <location>
        <begin position="7"/>
        <end position="190"/>
    </location>
</feature>
<sequence length="190" mass="20641">MNNNLQGDAIAAAIDVLNEERVIAYPTEAVFGVGCDPDSETAVMRLLELKQRPVDKGLILIAANYEQLKPYIDDTMLTDAQRETIFSRWPGPVTFVFPAPATTPRWLTGRFDSLAVRVTDHPLVVALCQAYGKPLVSTSANLSGLPPCRTVDEVRAQFGAAFPVVPGETGGRLNPSEIRDALTGELFRQG</sequence>
<name>TSAC_ECOK1</name>